<organism>
    <name type="scientific">Clostridium botulinum (strain Loch Maree / Type A3)</name>
    <dbReference type="NCBI Taxonomy" id="498214"/>
    <lineage>
        <taxon>Bacteria</taxon>
        <taxon>Bacillati</taxon>
        <taxon>Bacillota</taxon>
        <taxon>Clostridia</taxon>
        <taxon>Eubacteriales</taxon>
        <taxon>Clostridiaceae</taxon>
        <taxon>Clostridium</taxon>
    </lineage>
</organism>
<comment type="function">
    <text evidence="1">Prevents the cell division inhibition by proteins MinC and MinD at internal division sites while permitting inhibition at polar sites. This ensures cell division at the proper site by restricting the formation of a division septum at the midpoint of the long axis of the cell.</text>
</comment>
<comment type="similarity">
    <text evidence="1">Belongs to the MinE family.</text>
</comment>
<keyword id="KW-0131">Cell cycle</keyword>
<keyword id="KW-0132">Cell division</keyword>
<protein>
    <recommendedName>
        <fullName evidence="1">Cell division topological specificity factor</fullName>
    </recommendedName>
</protein>
<sequence length="87" mass="10027">MDLFKFFSKQSSKDVAKERLKLILIQDRNSISPDVLESIREDMLKVISKYIEIDNEDVDIKMSSVEEIEGMSPALIASIPIKRIKKK</sequence>
<reference key="1">
    <citation type="journal article" date="2007" name="PLoS ONE">
        <title>Analysis of the neurotoxin complex genes in Clostridium botulinum A1-A4 and B1 strains: BoNT/A3, /Ba4 and /B1 clusters are located within plasmids.</title>
        <authorList>
            <person name="Smith T.J."/>
            <person name="Hill K.K."/>
            <person name="Foley B.T."/>
            <person name="Detter J.C."/>
            <person name="Munk A.C."/>
            <person name="Bruce D.C."/>
            <person name="Doggett N.A."/>
            <person name="Smith L.A."/>
            <person name="Marks J.D."/>
            <person name="Xie G."/>
            <person name="Brettin T.S."/>
        </authorList>
    </citation>
    <scope>NUCLEOTIDE SEQUENCE [LARGE SCALE GENOMIC DNA]</scope>
    <source>
        <strain>Loch Maree / Type A3</strain>
    </source>
</reference>
<feature type="chain" id="PRO_1000114214" description="Cell division topological specificity factor">
    <location>
        <begin position="1"/>
        <end position="87"/>
    </location>
</feature>
<gene>
    <name evidence="1" type="primary">minE</name>
    <name type="ordered locus">CLK_2380</name>
</gene>
<dbReference type="EMBL" id="CP000962">
    <property type="protein sequence ID" value="ACA53922.1"/>
    <property type="molecule type" value="Genomic_DNA"/>
</dbReference>
<dbReference type="RefSeq" id="WP_003358099.1">
    <property type="nucleotide sequence ID" value="NC_010520.1"/>
</dbReference>
<dbReference type="SMR" id="B1KZS3"/>
<dbReference type="GeneID" id="5187008"/>
<dbReference type="KEGG" id="cbl:CLK_2380"/>
<dbReference type="HOGENOM" id="CLU_137929_1_0_9"/>
<dbReference type="GO" id="GO:0051301">
    <property type="term" value="P:cell division"/>
    <property type="evidence" value="ECO:0007669"/>
    <property type="project" value="UniProtKB-KW"/>
</dbReference>
<dbReference type="GO" id="GO:0032955">
    <property type="term" value="P:regulation of division septum assembly"/>
    <property type="evidence" value="ECO:0007669"/>
    <property type="project" value="InterPro"/>
</dbReference>
<dbReference type="FunFam" id="3.30.1070.10:FF:000003">
    <property type="entry name" value="Cell division topological specificity factor"/>
    <property type="match status" value="1"/>
</dbReference>
<dbReference type="Gene3D" id="3.30.1070.10">
    <property type="entry name" value="Cell division topological specificity factor MinE"/>
    <property type="match status" value="1"/>
</dbReference>
<dbReference type="HAMAP" id="MF_00262">
    <property type="entry name" value="MinE"/>
    <property type="match status" value="1"/>
</dbReference>
<dbReference type="InterPro" id="IPR005527">
    <property type="entry name" value="MinE"/>
</dbReference>
<dbReference type="InterPro" id="IPR036707">
    <property type="entry name" value="MinE_sf"/>
</dbReference>
<dbReference type="NCBIfam" id="TIGR01215">
    <property type="entry name" value="minE"/>
    <property type="match status" value="1"/>
</dbReference>
<dbReference type="NCBIfam" id="NF001422">
    <property type="entry name" value="PRK00296.1"/>
    <property type="match status" value="1"/>
</dbReference>
<dbReference type="Pfam" id="PF03776">
    <property type="entry name" value="MinE"/>
    <property type="match status" value="1"/>
</dbReference>
<dbReference type="SUPFAM" id="SSF55229">
    <property type="entry name" value="Cell division protein MinE topological specificity domain"/>
    <property type="match status" value="1"/>
</dbReference>
<proteinExistence type="inferred from homology"/>
<accession>B1KZS3</accession>
<evidence type="ECO:0000255" key="1">
    <source>
        <dbReference type="HAMAP-Rule" id="MF_00262"/>
    </source>
</evidence>
<name>MINE_CLOBM</name>